<organism>
    <name type="scientific">Yersinia pestis</name>
    <dbReference type="NCBI Taxonomy" id="632"/>
    <lineage>
        <taxon>Bacteria</taxon>
        <taxon>Pseudomonadati</taxon>
        <taxon>Pseudomonadota</taxon>
        <taxon>Gammaproteobacteria</taxon>
        <taxon>Enterobacterales</taxon>
        <taxon>Yersiniaceae</taxon>
        <taxon>Yersinia</taxon>
    </lineage>
</organism>
<comment type="function">
    <text evidence="1">Catalyzes a reversible aldol reaction between acetaldehyde and D-glyceraldehyde 3-phosphate to generate 2-deoxy-D-ribose 5-phosphate.</text>
</comment>
<comment type="catalytic activity">
    <reaction evidence="1">
        <text>2-deoxy-D-ribose 5-phosphate = D-glyceraldehyde 3-phosphate + acetaldehyde</text>
        <dbReference type="Rhea" id="RHEA:12821"/>
        <dbReference type="ChEBI" id="CHEBI:15343"/>
        <dbReference type="ChEBI" id="CHEBI:59776"/>
        <dbReference type="ChEBI" id="CHEBI:62877"/>
        <dbReference type="EC" id="4.1.2.4"/>
    </reaction>
</comment>
<comment type="pathway">
    <text evidence="1">Carbohydrate degradation; 2-deoxy-D-ribose 1-phosphate degradation; D-glyceraldehyde 3-phosphate and acetaldehyde from 2-deoxy-alpha-D-ribose 1-phosphate: step 2/2.</text>
</comment>
<comment type="subcellular location">
    <subcellularLocation>
        <location evidence="1">Cytoplasm</location>
    </subcellularLocation>
</comment>
<comment type="similarity">
    <text evidence="1 2">Belongs to the DeoC/FbaB aldolase family. DeoC type 2 subfamily.</text>
</comment>
<comment type="sequence caution" evidence="2">
    <conflict type="erroneous initiation">
        <sequence resource="EMBL-CDS" id="AAM87288"/>
    </conflict>
</comment>
<comment type="sequence caution" evidence="2">
    <conflict type="erroneous initiation">
        <sequence resource="EMBL-CDS" id="AAS63893"/>
    </conflict>
</comment>
<keyword id="KW-0963">Cytoplasm</keyword>
<keyword id="KW-0456">Lyase</keyword>
<keyword id="KW-1185">Reference proteome</keyword>
<keyword id="KW-0704">Schiff base</keyword>
<sequence>MTDLTACAHLNDYAKRALSLMDLTTLNDDDTDEKVIALCHQAKSPAGNTAAICIYPRFIPVARKALREQGTPEIRIATVTNFPHGNDDVAIALAETRAAIAYGADEVDVVFPYRALMAGNDKIGFELVKTCKEACAAANVLLKVIIETGELKQAHLIRQASEIAIKAGADFIKTSTGKVPVNATLESADIMIRTIRELGVGETVGFKPAGGVRTAEDAAQFLQLADQLMGEGWADARHFRFGASSLLASLLTTLGHQSNANSSGY</sequence>
<gene>
    <name type="primary">deoC2</name>
    <name type="ordered locus">YPO0436</name>
    <name type="ordered locus">y3743</name>
    <name type="ordered locus">YP_3745</name>
</gene>
<dbReference type="EC" id="4.1.2.4" evidence="1"/>
<dbReference type="EMBL" id="AL590842">
    <property type="protein sequence ID" value="CAL19117.1"/>
    <property type="molecule type" value="Genomic_DNA"/>
</dbReference>
<dbReference type="EMBL" id="AE009952">
    <property type="protein sequence ID" value="AAM87288.1"/>
    <property type="status" value="ALT_INIT"/>
    <property type="molecule type" value="Genomic_DNA"/>
</dbReference>
<dbReference type="EMBL" id="AE017042">
    <property type="protein sequence ID" value="AAS63893.1"/>
    <property type="status" value="ALT_INIT"/>
    <property type="molecule type" value="Genomic_DNA"/>
</dbReference>
<dbReference type="PIR" id="AC0054">
    <property type="entry name" value="AC0054"/>
</dbReference>
<dbReference type="RefSeq" id="YP_002345512.1">
    <property type="nucleotide sequence ID" value="NC_003143.1"/>
</dbReference>
<dbReference type="SMR" id="Q8ZIQ4"/>
<dbReference type="IntAct" id="Q8ZIQ4">
    <property type="interactions" value="3"/>
</dbReference>
<dbReference type="STRING" id="214092.YPO0436"/>
<dbReference type="PaxDb" id="214092-YPO0436"/>
<dbReference type="DNASU" id="1148690"/>
<dbReference type="EnsemblBacteria" id="AAS63893">
    <property type="protein sequence ID" value="AAS63893"/>
    <property type="gene ID" value="YP_3745"/>
</dbReference>
<dbReference type="KEGG" id="ype:YPO0436"/>
<dbReference type="KEGG" id="ypk:y3743"/>
<dbReference type="KEGG" id="ypm:YP_3745"/>
<dbReference type="PATRIC" id="fig|214092.21.peg.680"/>
<dbReference type="eggNOG" id="COG0274">
    <property type="taxonomic scope" value="Bacteria"/>
</dbReference>
<dbReference type="HOGENOM" id="CLU_053595_3_1_6"/>
<dbReference type="OMA" id="MNACIPP"/>
<dbReference type="OrthoDB" id="6579831at2"/>
<dbReference type="UniPathway" id="UPA00002">
    <property type="reaction ID" value="UER00468"/>
</dbReference>
<dbReference type="Proteomes" id="UP000000815">
    <property type="component" value="Chromosome"/>
</dbReference>
<dbReference type="Proteomes" id="UP000001019">
    <property type="component" value="Chromosome"/>
</dbReference>
<dbReference type="Proteomes" id="UP000002490">
    <property type="component" value="Chromosome"/>
</dbReference>
<dbReference type="GO" id="GO:0005737">
    <property type="term" value="C:cytoplasm"/>
    <property type="evidence" value="ECO:0007669"/>
    <property type="project" value="UniProtKB-SubCell"/>
</dbReference>
<dbReference type="GO" id="GO:0004139">
    <property type="term" value="F:deoxyribose-phosphate aldolase activity"/>
    <property type="evidence" value="ECO:0000318"/>
    <property type="project" value="GO_Central"/>
</dbReference>
<dbReference type="GO" id="GO:0006018">
    <property type="term" value="P:2-deoxyribose 1-phosphate catabolic process"/>
    <property type="evidence" value="ECO:0007669"/>
    <property type="project" value="UniProtKB-UniRule"/>
</dbReference>
<dbReference type="GO" id="GO:0016052">
    <property type="term" value="P:carbohydrate catabolic process"/>
    <property type="evidence" value="ECO:0000318"/>
    <property type="project" value="GO_Central"/>
</dbReference>
<dbReference type="GO" id="GO:0009264">
    <property type="term" value="P:deoxyribonucleotide catabolic process"/>
    <property type="evidence" value="ECO:0000318"/>
    <property type="project" value="GO_Central"/>
</dbReference>
<dbReference type="CDD" id="cd00959">
    <property type="entry name" value="DeoC"/>
    <property type="match status" value="1"/>
</dbReference>
<dbReference type="FunFam" id="3.20.20.70:FF:000034">
    <property type="entry name" value="Deoxyribose-phosphate aldolase"/>
    <property type="match status" value="1"/>
</dbReference>
<dbReference type="Gene3D" id="3.20.20.70">
    <property type="entry name" value="Aldolase class I"/>
    <property type="match status" value="1"/>
</dbReference>
<dbReference type="HAMAP" id="MF_00592">
    <property type="entry name" value="DeoC_type2"/>
    <property type="match status" value="1"/>
</dbReference>
<dbReference type="InterPro" id="IPR013785">
    <property type="entry name" value="Aldolase_TIM"/>
</dbReference>
<dbReference type="InterPro" id="IPR011343">
    <property type="entry name" value="DeoC"/>
</dbReference>
<dbReference type="InterPro" id="IPR002915">
    <property type="entry name" value="DeoC/FbaB/LacD_aldolase"/>
</dbReference>
<dbReference type="InterPro" id="IPR023649">
    <property type="entry name" value="DeoC_typeII"/>
</dbReference>
<dbReference type="NCBIfam" id="TIGR00126">
    <property type="entry name" value="deoC"/>
    <property type="match status" value="1"/>
</dbReference>
<dbReference type="PANTHER" id="PTHR10889">
    <property type="entry name" value="DEOXYRIBOSE-PHOSPHATE ALDOLASE"/>
    <property type="match status" value="1"/>
</dbReference>
<dbReference type="PANTHER" id="PTHR10889:SF3">
    <property type="entry name" value="DEOXYRIBOSE-PHOSPHATE ALDOLASE"/>
    <property type="match status" value="1"/>
</dbReference>
<dbReference type="Pfam" id="PF01791">
    <property type="entry name" value="DeoC"/>
    <property type="match status" value="1"/>
</dbReference>
<dbReference type="PIRSF" id="PIRSF001357">
    <property type="entry name" value="DeoC"/>
    <property type="match status" value="1"/>
</dbReference>
<dbReference type="SMART" id="SM01133">
    <property type="entry name" value="DeoC"/>
    <property type="match status" value="1"/>
</dbReference>
<dbReference type="SUPFAM" id="SSF51569">
    <property type="entry name" value="Aldolase"/>
    <property type="match status" value="1"/>
</dbReference>
<reference key="1">
    <citation type="journal article" date="2001" name="Nature">
        <title>Genome sequence of Yersinia pestis, the causative agent of plague.</title>
        <authorList>
            <person name="Parkhill J."/>
            <person name="Wren B.W."/>
            <person name="Thomson N.R."/>
            <person name="Titball R.W."/>
            <person name="Holden M.T.G."/>
            <person name="Prentice M.B."/>
            <person name="Sebaihia M."/>
            <person name="James K.D."/>
            <person name="Churcher C.M."/>
            <person name="Mungall K.L."/>
            <person name="Baker S."/>
            <person name="Basham D."/>
            <person name="Bentley S.D."/>
            <person name="Brooks K."/>
            <person name="Cerdeno-Tarraga A.-M."/>
            <person name="Chillingworth T."/>
            <person name="Cronin A."/>
            <person name="Davies R.M."/>
            <person name="Davis P."/>
            <person name="Dougan G."/>
            <person name="Feltwell T."/>
            <person name="Hamlin N."/>
            <person name="Holroyd S."/>
            <person name="Jagels K."/>
            <person name="Karlyshev A.V."/>
            <person name="Leather S."/>
            <person name="Moule S."/>
            <person name="Oyston P.C.F."/>
            <person name="Quail M.A."/>
            <person name="Rutherford K.M."/>
            <person name="Simmonds M."/>
            <person name="Skelton J."/>
            <person name="Stevens K."/>
            <person name="Whitehead S."/>
            <person name="Barrell B.G."/>
        </authorList>
    </citation>
    <scope>NUCLEOTIDE SEQUENCE [LARGE SCALE GENOMIC DNA]</scope>
    <source>
        <strain>CO-92 / Biovar Orientalis</strain>
    </source>
</reference>
<reference key="2">
    <citation type="journal article" date="2002" name="J. Bacteriol.">
        <title>Genome sequence of Yersinia pestis KIM.</title>
        <authorList>
            <person name="Deng W."/>
            <person name="Burland V."/>
            <person name="Plunkett G. III"/>
            <person name="Boutin A."/>
            <person name="Mayhew G.F."/>
            <person name="Liss P."/>
            <person name="Perna N.T."/>
            <person name="Rose D.J."/>
            <person name="Mau B."/>
            <person name="Zhou S."/>
            <person name="Schwartz D.C."/>
            <person name="Fetherston J.D."/>
            <person name="Lindler L.E."/>
            <person name="Brubaker R.R."/>
            <person name="Plano G.V."/>
            <person name="Straley S.C."/>
            <person name="McDonough K.A."/>
            <person name="Nilles M.L."/>
            <person name="Matson J.S."/>
            <person name="Blattner F.R."/>
            <person name="Perry R.D."/>
        </authorList>
    </citation>
    <scope>NUCLEOTIDE SEQUENCE [LARGE SCALE GENOMIC DNA]</scope>
    <source>
        <strain>KIM10+ / Biovar Mediaevalis</strain>
    </source>
</reference>
<reference key="3">
    <citation type="journal article" date="2004" name="DNA Res.">
        <title>Complete genome sequence of Yersinia pestis strain 91001, an isolate avirulent to humans.</title>
        <authorList>
            <person name="Song Y."/>
            <person name="Tong Z."/>
            <person name="Wang J."/>
            <person name="Wang L."/>
            <person name="Guo Z."/>
            <person name="Han Y."/>
            <person name="Zhang J."/>
            <person name="Pei D."/>
            <person name="Zhou D."/>
            <person name="Qin H."/>
            <person name="Pang X."/>
            <person name="Han Y."/>
            <person name="Zhai J."/>
            <person name="Li M."/>
            <person name="Cui B."/>
            <person name="Qi Z."/>
            <person name="Jin L."/>
            <person name="Dai R."/>
            <person name="Chen F."/>
            <person name="Li S."/>
            <person name="Ye C."/>
            <person name="Du Z."/>
            <person name="Lin W."/>
            <person name="Wang J."/>
            <person name="Yu J."/>
            <person name="Yang H."/>
            <person name="Wang J."/>
            <person name="Huang P."/>
            <person name="Yang R."/>
        </authorList>
    </citation>
    <scope>NUCLEOTIDE SEQUENCE [LARGE SCALE GENOMIC DNA]</scope>
    <source>
        <strain>91001 / Biovar Mediaevalis</strain>
    </source>
</reference>
<accession>Q8ZIQ4</accession>
<accession>Q0WJM6</accession>
<feature type="chain" id="PRO_0000057309" description="Deoxyribose-phosphate aldolase 2">
    <location>
        <begin position="1"/>
        <end position="265"/>
    </location>
</feature>
<feature type="active site" description="Proton donor/acceptor" evidence="1">
    <location>
        <position position="108"/>
    </location>
</feature>
<feature type="active site" description="Schiff-base intermediate with acetaldehyde" evidence="1">
    <location>
        <position position="173"/>
    </location>
</feature>
<feature type="active site" description="Proton donor/acceptor" evidence="1">
    <location>
        <position position="207"/>
    </location>
</feature>
<evidence type="ECO:0000255" key="1">
    <source>
        <dbReference type="HAMAP-Rule" id="MF_00592"/>
    </source>
</evidence>
<evidence type="ECO:0000305" key="2"/>
<name>DEOC2_YERPE</name>
<protein>
    <recommendedName>
        <fullName evidence="1">Deoxyribose-phosphate aldolase 2</fullName>
        <shortName evidence="1">DERA 2</shortName>
        <ecNumber evidence="1">4.1.2.4</ecNumber>
    </recommendedName>
    <alternativeName>
        <fullName evidence="1">2-deoxy-D-ribose 5-phosphate aldolase 2</fullName>
    </alternativeName>
    <alternativeName>
        <fullName evidence="1">Phosphodeoxyriboaldolase 2</fullName>
        <shortName evidence="1">Deoxyriboaldolase 2</shortName>
    </alternativeName>
</protein>
<proteinExistence type="inferred from homology"/>